<feature type="chain" id="PRO_1000148028" description="Adenosylcobinamide-GDP ribazoletransferase">
    <location>
        <begin position="1"/>
        <end position="248"/>
    </location>
</feature>
<feature type="transmembrane region" description="Helical" evidence="1">
    <location>
        <begin position="24"/>
        <end position="44"/>
    </location>
</feature>
<feature type="transmembrane region" description="Helical" evidence="1">
    <location>
        <begin position="70"/>
        <end position="90"/>
    </location>
</feature>
<feature type="transmembrane region" description="Helical" evidence="1">
    <location>
        <begin position="106"/>
        <end position="126"/>
    </location>
</feature>
<feature type="transmembrane region" description="Helical" evidence="1">
    <location>
        <begin position="134"/>
        <end position="154"/>
    </location>
</feature>
<feature type="transmembrane region" description="Helical" evidence="1">
    <location>
        <begin position="168"/>
        <end position="188"/>
    </location>
</feature>
<feature type="transmembrane region" description="Helical" evidence="1">
    <location>
        <begin position="189"/>
        <end position="209"/>
    </location>
</feature>
<feature type="transmembrane region" description="Helical" evidence="1">
    <location>
        <begin position="228"/>
        <end position="248"/>
    </location>
</feature>
<gene>
    <name evidence="1" type="primary">cobS</name>
    <name type="ordered locus">LMHCC_1503</name>
</gene>
<sequence>MRTLILLIQFFTRIPLPIQINMDEINLKKGSALLPFVGVIIGAWNWLIFTLVSLVMPLPVAIIAGLFAEIIITGGFHVDALADTADGLFSSRKRERMLEIMKDSRVGANGVIAICFYFLFYGALFLSVPDTQQIGWLFFVLPIVAKGVTMLLFAKMTYAGSKEGLGSIFLGVPWWPIVIAQVIVLVALGAFFSYIGVIAYAGVILFTIIYRAFVYKRIGGMNGDTLGAGGQMGQLICLFCLVLLWGLI</sequence>
<proteinExistence type="inferred from homology"/>
<evidence type="ECO:0000255" key="1">
    <source>
        <dbReference type="HAMAP-Rule" id="MF_00719"/>
    </source>
</evidence>
<accession>B8DC84</accession>
<dbReference type="EC" id="2.7.8.26" evidence="1"/>
<dbReference type="EMBL" id="CP001175">
    <property type="protein sequence ID" value="ACK39847.1"/>
    <property type="molecule type" value="Genomic_DNA"/>
</dbReference>
<dbReference type="RefSeq" id="WP_012581537.1">
    <property type="nucleotide sequence ID" value="NC_011660.1"/>
</dbReference>
<dbReference type="KEGG" id="lmh:LMHCC_1503"/>
<dbReference type="HOGENOM" id="CLU_057426_1_2_9"/>
<dbReference type="UniPathway" id="UPA00148">
    <property type="reaction ID" value="UER00238"/>
</dbReference>
<dbReference type="GO" id="GO:0005886">
    <property type="term" value="C:plasma membrane"/>
    <property type="evidence" value="ECO:0007669"/>
    <property type="project" value="UniProtKB-SubCell"/>
</dbReference>
<dbReference type="GO" id="GO:0051073">
    <property type="term" value="F:adenosylcobinamide-GDP ribazoletransferase activity"/>
    <property type="evidence" value="ECO:0007669"/>
    <property type="project" value="UniProtKB-UniRule"/>
</dbReference>
<dbReference type="GO" id="GO:0008818">
    <property type="term" value="F:cobalamin 5'-phosphate synthase activity"/>
    <property type="evidence" value="ECO:0007669"/>
    <property type="project" value="UniProtKB-UniRule"/>
</dbReference>
<dbReference type="GO" id="GO:0009236">
    <property type="term" value="P:cobalamin biosynthetic process"/>
    <property type="evidence" value="ECO:0007669"/>
    <property type="project" value="UniProtKB-UniRule"/>
</dbReference>
<dbReference type="HAMAP" id="MF_00719">
    <property type="entry name" value="CobS"/>
    <property type="match status" value="1"/>
</dbReference>
<dbReference type="InterPro" id="IPR003805">
    <property type="entry name" value="CobS"/>
</dbReference>
<dbReference type="NCBIfam" id="TIGR00317">
    <property type="entry name" value="cobS"/>
    <property type="match status" value="1"/>
</dbReference>
<dbReference type="PANTHER" id="PTHR34148">
    <property type="entry name" value="ADENOSYLCOBINAMIDE-GDP RIBAZOLETRANSFERASE"/>
    <property type="match status" value="1"/>
</dbReference>
<dbReference type="PANTHER" id="PTHR34148:SF1">
    <property type="entry name" value="ADENOSYLCOBINAMIDE-GDP RIBAZOLETRANSFERASE"/>
    <property type="match status" value="1"/>
</dbReference>
<dbReference type="Pfam" id="PF02654">
    <property type="entry name" value="CobS"/>
    <property type="match status" value="1"/>
</dbReference>
<name>COBS_LISMH</name>
<reference key="1">
    <citation type="journal article" date="2011" name="J. Bacteriol.">
        <title>Genome sequence of lineage III Listeria monocytogenes strain HCC23.</title>
        <authorList>
            <person name="Steele C.L."/>
            <person name="Donaldson J.R."/>
            <person name="Paul D."/>
            <person name="Banes M.M."/>
            <person name="Arick T."/>
            <person name="Bridges S.M."/>
            <person name="Lawrence M.L."/>
        </authorList>
    </citation>
    <scope>NUCLEOTIDE SEQUENCE [LARGE SCALE GENOMIC DNA]</scope>
    <source>
        <strain>HCC23</strain>
    </source>
</reference>
<keyword id="KW-1003">Cell membrane</keyword>
<keyword id="KW-0169">Cobalamin biosynthesis</keyword>
<keyword id="KW-0460">Magnesium</keyword>
<keyword id="KW-0472">Membrane</keyword>
<keyword id="KW-0808">Transferase</keyword>
<keyword id="KW-0812">Transmembrane</keyword>
<keyword id="KW-1133">Transmembrane helix</keyword>
<comment type="function">
    <text evidence="1">Joins adenosylcobinamide-GDP and alpha-ribazole to generate adenosylcobalamin (Ado-cobalamin). Also synthesizes adenosylcobalamin 5'-phosphate from adenosylcobinamide-GDP and alpha-ribazole 5'-phosphate.</text>
</comment>
<comment type="catalytic activity">
    <reaction evidence="1">
        <text>alpha-ribazole + adenosylcob(III)inamide-GDP = adenosylcob(III)alamin + GMP + H(+)</text>
        <dbReference type="Rhea" id="RHEA:16049"/>
        <dbReference type="ChEBI" id="CHEBI:10329"/>
        <dbReference type="ChEBI" id="CHEBI:15378"/>
        <dbReference type="ChEBI" id="CHEBI:18408"/>
        <dbReference type="ChEBI" id="CHEBI:58115"/>
        <dbReference type="ChEBI" id="CHEBI:60487"/>
        <dbReference type="EC" id="2.7.8.26"/>
    </reaction>
</comment>
<comment type="catalytic activity">
    <reaction evidence="1">
        <text>alpha-ribazole 5'-phosphate + adenosylcob(III)inamide-GDP = adenosylcob(III)alamin 5'-phosphate + GMP + H(+)</text>
        <dbReference type="Rhea" id="RHEA:23560"/>
        <dbReference type="ChEBI" id="CHEBI:15378"/>
        <dbReference type="ChEBI" id="CHEBI:57918"/>
        <dbReference type="ChEBI" id="CHEBI:58115"/>
        <dbReference type="ChEBI" id="CHEBI:60487"/>
        <dbReference type="ChEBI" id="CHEBI:60493"/>
        <dbReference type="EC" id="2.7.8.26"/>
    </reaction>
</comment>
<comment type="cofactor">
    <cofactor evidence="1">
        <name>Mg(2+)</name>
        <dbReference type="ChEBI" id="CHEBI:18420"/>
    </cofactor>
</comment>
<comment type="pathway">
    <text evidence="1">Cofactor biosynthesis; adenosylcobalamin biosynthesis; adenosylcobalamin from cob(II)yrinate a,c-diamide: step 7/7.</text>
</comment>
<comment type="subcellular location">
    <subcellularLocation>
        <location evidence="1">Cell membrane</location>
        <topology evidence="1">Multi-pass membrane protein</topology>
    </subcellularLocation>
</comment>
<comment type="similarity">
    <text evidence="1">Belongs to the CobS family.</text>
</comment>
<protein>
    <recommendedName>
        <fullName evidence="1">Adenosylcobinamide-GDP ribazoletransferase</fullName>
        <ecNumber evidence="1">2.7.8.26</ecNumber>
    </recommendedName>
    <alternativeName>
        <fullName evidence="1">Cobalamin synthase</fullName>
    </alternativeName>
    <alternativeName>
        <fullName evidence="1">Cobalamin-5'-phosphate synthase</fullName>
    </alternativeName>
</protein>
<organism>
    <name type="scientific">Listeria monocytogenes serotype 4a (strain HCC23)</name>
    <dbReference type="NCBI Taxonomy" id="552536"/>
    <lineage>
        <taxon>Bacteria</taxon>
        <taxon>Bacillati</taxon>
        <taxon>Bacillota</taxon>
        <taxon>Bacilli</taxon>
        <taxon>Bacillales</taxon>
        <taxon>Listeriaceae</taxon>
        <taxon>Listeria</taxon>
    </lineage>
</organism>